<evidence type="ECO:0000255" key="1">
    <source>
        <dbReference type="HAMAP-Rule" id="MF_00402"/>
    </source>
</evidence>
<evidence type="ECO:0000305" key="2"/>
<comment type="function">
    <text evidence="1">This protein is located at the 30S-50S ribosomal subunit interface and may play a role in the structure and function of the aminoacyl-tRNA binding site.</text>
</comment>
<comment type="similarity">
    <text evidence="1">Belongs to the bacterial ribosomal protein bL19 family.</text>
</comment>
<protein>
    <recommendedName>
        <fullName evidence="1">Large ribosomal subunit protein bL19</fullName>
    </recommendedName>
    <alternativeName>
        <fullName evidence="2">50S ribosomal protein L19</fullName>
    </alternativeName>
</protein>
<dbReference type="EMBL" id="AP008955">
    <property type="protein sequence ID" value="BAH44589.1"/>
    <property type="molecule type" value="Genomic_DNA"/>
</dbReference>
<dbReference type="RefSeq" id="WP_015891886.1">
    <property type="nucleotide sequence ID" value="NC_012491.1"/>
</dbReference>
<dbReference type="SMR" id="C0ZFN0"/>
<dbReference type="STRING" id="358681.BBR47_36120"/>
<dbReference type="GeneID" id="61032544"/>
<dbReference type="KEGG" id="bbe:BBR47_36120"/>
<dbReference type="eggNOG" id="COG0335">
    <property type="taxonomic scope" value="Bacteria"/>
</dbReference>
<dbReference type="HOGENOM" id="CLU_103507_2_1_9"/>
<dbReference type="Proteomes" id="UP000001877">
    <property type="component" value="Chromosome"/>
</dbReference>
<dbReference type="GO" id="GO:0022625">
    <property type="term" value="C:cytosolic large ribosomal subunit"/>
    <property type="evidence" value="ECO:0007669"/>
    <property type="project" value="TreeGrafter"/>
</dbReference>
<dbReference type="GO" id="GO:0003735">
    <property type="term" value="F:structural constituent of ribosome"/>
    <property type="evidence" value="ECO:0007669"/>
    <property type="project" value="InterPro"/>
</dbReference>
<dbReference type="GO" id="GO:0006412">
    <property type="term" value="P:translation"/>
    <property type="evidence" value="ECO:0007669"/>
    <property type="project" value="UniProtKB-UniRule"/>
</dbReference>
<dbReference type="FunFam" id="2.30.30.790:FF:000001">
    <property type="entry name" value="50S ribosomal protein L19"/>
    <property type="match status" value="1"/>
</dbReference>
<dbReference type="Gene3D" id="2.30.30.790">
    <property type="match status" value="1"/>
</dbReference>
<dbReference type="HAMAP" id="MF_00402">
    <property type="entry name" value="Ribosomal_bL19"/>
    <property type="match status" value="1"/>
</dbReference>
<dbReference type="InterPro" id="IPR001857">
    <property type="entry name" value="Ribosomal_bL19"/>
</dbReference>
<dbReference type="InterPro" id="IPR018257">
    <property type="entry name" value="Ribosomal_bL19_CS"/>
</dbReference>
<dbReference type="InterPro" id="IPR038657">
    <property type="entry name" value="Ribosomal_bL19_sf"/>
</dbReference>
<dbReference type="InterPro" id="IPR008991">
    <property type="entry name" value="Translation_prot_SH3-like_sf"/>
</dbReference>
<dbReference type="NCBIfam" id="TIGR01024">
    <property type="entry name" value="rplS_bact"/>
    <property type="match status" value="1"/>
</dbReference>
<dbReference type="PANTHER" id="PTHR15680:SF9">
    <property type="entry name" value="LARGE RIBOSOMAL SUBUNIT PROTEIN BL19M"/>
    <property type="match status" value="1"/>
</dbReference>
<dbReference type="PANTHER" id="PTHR15680">
    <property type="entry name" value="RIBOSOMAL PROTEIN L19"/>
    <property type="match status" value="1"/>
</dbReference>
<dbReference type="Pfam" id="PF01245">
    <property type="entry name" value="Ribosomal_L19"/>
    <property type="match status" value="1"/>
</dbReference>
<dbReference type="PIRSF" id="PIRSF002191">
    <property type="entry name" value="Ribosomal_L19"/>
    <property type="match status" value="1"/>
</dbReference>
<dbReference type="PRINTS" id="PR00061">
    <property type="entry name" value="RIBOSOMALL19"/>
</dbReference>
<dbReference type="SUPFAM" id="SSF50104">
    <property type="entry name" value="Translation proteins SH3-like domain"/>
    <property type="match status" value="1"/>
</dbReference>
<dbReference type="PROSITE" id="PS01015">
    <property type="entry name" value="RIBOSOMAL_L19"/>
    <property type="match status" value="1"/>
</dbReference>
<sequence length="115" mass="13449">MNQIIRELEKAQLKQDIPAFRPGDTVRVHVKVIEGQRERIQLFEGVCIRRRGTGISETFTARKISYGVGVERTFPVHTPKIDKIEIVRHGKVRRAKLYYLRDRVGKAARIKEIRR</sequence>
<accession>C0ZFN0</accession>
<reference key="1">
    <citation type="submission" date="2005-03" db="EMBL/GenBank/DDBJ databases">
        <title>Brevibacillus brevis strain 47, complete genome.</title>
        <authorList>
            <person name="Hosoyama A."/>
            <person name="Yamada R."/>
            <person name="Hongo Y."/>
            <person name="Terui Y."/>
            <person name="Ankai A."/>
            <person name="Masuyama W."/>
            <person name="Sekiguchi M."/>
            <person name="Takeda T."/>
            <person name="Asano K."/>
            <person name="Ohji S."/>
            <person name="Ichikawa N."/>
            <person name="Narita S."/>
            <person name="Aoki N."/>
            <person name="Miura H."/>
            <person name="Matsushita S."/>
            <person name="Sekigawa T."/>
            <person name="Yamagata H."/>
            <person name="Yoshikawa H."/>
            <person name="Udaka S."/>
            <person name="Tanikawa S."/>
            <person name="Fujita N."/>
        </authorList>
    </citation>
    <scope>NUCLEOTIDE SEQUENCE [LARGE SCALE GENOMIC DNA]</scope>
    <source>
        <strain>47 / JCM 6285 / NBRC 100599</strain>
    </source>
</reference>
<gene>
    <name evidence="1" type="primary">rplS</name>
    <name type="ordered locus">BBR47_36120</name>
</gene>
<feature type="chain" id="PRO_1000205882" description="Large ribosomal subunit protein bL19">
    <location>
        <begin position="1"/>
        <end position="115"/>
    </location>
</feature>
<proteinExistence type="inferred from homology"/>
<keyword id="KW-1185">Reference proteome</keyword>
<keyword id="KW-0687">Ribonucleoprotein</keyword>
<keyword id="KW-0689">Ribosomal protein</keyword>
<organism>
    <name type="scientific">Brevibacillus brevis (strain 47 / JCM 6285 / NBRC 100599)</name>
    <dbReference type="NCBI Taxonomy" id="358681"/>
    <lineage>
        <taxon>Bacteria</taxon>
        <taxon>Bacillati</taxon>
        <taxon>Bacillota</taxon>
        <taxon>Bacilli</taxon>
        <taxon>Bacillales</taxon>
        <taxon>Paenibacillaceae</taxon>
        <taxon>Brevibacillus</taxon>
    </lineage>
</organism>
<name>RL19_BREBN</name>